<organism>
    <name type="scientific">Homo sapiens</name>
    <name type="common">Human</name>
    <dbReference type="NCBI Taxonomy" id="9606"/>
    <lineage>
        <taxon>Eukaryota</taxon>
        <taxon>Metazoa</taxon>
        <taxon>Chordata</taxon>
        <taxon>Craniata</taxon>
        <taxon>Vertebrata</taxon>
        <taxon>Euteleostomi</taxon>
        <taxon>Mammalia</taxon>
        <taxon>Eutheria</taxon>
        <taxon>Euarchontoglires</taxon>
        <taxon>Primates</taxon>
        <taxon>Haplorrhini</taxon>
        <taxon>Catarrhini</taxon>
        <taxon>Hominidae</taxon>
        <taxon>Homo</taxon>
    </lineage>
</organism>
<sequence length="228" mass="25330">MSYVFVNDSSQTNVPLLQACIDGDFNYSKRLLESGFDPNIRDSRGRTGLHLAAARGNVDICQLLHKFGADLLATDYQGNTALHLCGHVDTIQFLVSNGLKIDICNHQGATPLVLAKRRGVNKDVIRLLESLEEQEVKGFNRGTHSKLETMQTAESESAMESHSLLNPNLQQGEGVLSSFRTTWQEFVEDLGFWRVLLLIFVIALLSLGIAYYVSGVLPFVENQPELVH</sequence>
<evidence type="ECO:0000255" key="1"/>
<evidence type="ECO:0000305" key="2"/>
<gene>
    <name type="primary">ANKRD46</name>
</gene>
<reference key="1">
    <citation type="submission" date="2001-12" db="EMBL/GenBank/DDBJ databases">
        <title>A novel ankyrin-repeat containing gene expressed in SAMP8 hippocampus.</title>
        <authorList>
            <person name="Yamamura N."/>
            <person name="Koike N."/>
            <person name="Nomura Y."/>
            <person name="Sakaki Y."/>
            <person name="Tashiro T."/>
            <person name="Furihata C."/>
        </authorList>
    </citation>
    <scope>NUCLEOTIDE SEQUENCE [MRNA] (ISOFORM 1)</scope>
</reference>
<reference key="2">
    <citation type="journal article" date="2007" name="BMC Genomics">
        <title>The full-ORF clone resource of the German cDNA consortium.</title>
        <authorList>
            <person name="Bechtel S."/>
            <person name="Rosenfelder H."/>
            <person name="Duda A."/>
            <person name="Schmidt C.P."/>
            <person name="Ernst U."/>
            <person name="Wellenreuther R."/>
            <person name="Mehrle A."/>
            <person name="Schuster C."/>
            <person name="Bahr A."/>
            <person name="Bloecker H."/>
            <person name="Heubner D."/>
            <person name="Hoerlein A."/>
            <person name="Michel G."/>
            <person name="Wedler H."/>
            <person name="Koehrer K."/>
            <person name="Ottenwaelder B."/>
            <person name="Poustka A."/>
            <person name="Wiemann S."/>
            <person name="Schupp I."/>
        </authorList>
    </citation>
    <scope>NUCLEOTIDE SEQUENCE [LARGE SCALE MRNA] (ISOFORM 2)</scope>
    <source>
        <tissue>Lymph node</tissue>
    </source>
</reference>
<reference key="3">
    <citation type="journal article" date="2004" name="Genome Res.">
        <title>The status, quality, and expansion of the NIH full-length cDNA project: the Mammalian Gene Collection (MGC).</title>
        <authorList>
            <consortium name="The MGC Project Team"/>
        </authorList>
    </citation>
    <scope>NUCLEOTIDE SEQUENCE [LARGE SCALE MRNA] (ISOFORMS 1 AND 2)</scope>
    <source>
        <tissue>Placenta</tissue>
        <tissue>Skin</tissue>
    </source>
</reference>
<reference key="4">
    <citation type="journal article" date="2011" name="BMC Syst. Biol.">
        <title>Initial characterization of the human central proteome.</title>
        <authorList>
            <person name="Burkard T.R."/>
            <person name="Planyavsky M."/>
            <person name="Kaupe I."/>
            <person name="Breitwieser F.P."/>
            <person name="Buerckstuemmer T."/>
            <person name="Bennett K.L."/>
            <person name="Superti-Furga G."/>
            <person name="Colinge J."/>
        </authorList>
    </citation>
    <scope>IDENTIFICATION BY MASS SPECTROMETRY [LARGE SCALE ANALYSIS]</scope>
</reference>
<reference key="5">
    <citation type="journal article" date="2015" name="Proteomics">
        <title>N-terminome analysis of the human mitochondrial proteome.</title>
        <authorList>
            <person name="Vaca Jacome A.S."/>
            <person name="Rabilloud T."/>
            <person name="Schaeffer-Reiss C."/>
            <person name="Rompais M."/>
            <person name="Ayoub D."/>
            <person name="Lane L."/>
            <person name="Bairoch A."/>
            <person name="Van Dorsselaer A."/>
            <person name="Carapito C."/>
        </authorList>
    </citation>
    <scope>IDENTIFICATION BY MASS SPECTROMETRY [LARGE SCALE ANALYSIS]</scope>
</reference>
<protein>
    <recommendedName>
        <fullName>Ankyrin repeat domain-containing protein 46</fullName>
    </recommendedName>
    <alternativeName>
        <fullName>Ankyrin repeat small protein</fullName>
        <shortName>ANK-S</shortName>
    </alternativeName>
</protein>
<accession>Q86W74</accession>
<accession>Q6P9B7</accession>
<keyword id="KW-0025">Alternative splicing</keyword>
<keyword id="KW-0040">ANK repeat</keyword>
<keyword id="KW-0472">Membrane</keyword>
<keyword id="KW-1267">Proteomics identification</keyword>
<keyword id="KW-1185">Reference proteome</keyword>
<keyword id="KW-0677">Repeat</keyword>
<keyword id="KW-0812">Transmembrane</keyword>
<keyword id="KW-1133">Transmembrane helix</keyword>
<name>ANR46_HUMAN</name>
<proteinExistence type="evidence at protein level"/>
<dbReference type="EMBL" id="AB077205">
    <property type="protein sequence ID" value="BAD23947.1"/>
    <property type="molecule type" value="mRNA"/>
</dbReference>
<dbReference type="EMBL" id="AL832842">
    <property type="protein sequence ID" value="CAI46169.1"/>
    <property type="molecule type" value="mRNA"/>
</dbReference>
<dbReference type="EMBL" id="BC050396">
    <property type="protein sequence ID" value="AAH50396.1"/>
    <property type="molecule type" value="mRNA"/>
</dbReference>
<dbReference type="EMBL" id="BC060843">
    <property type="protein sequence ID" value="AAH60843.1"/>
    <property type="molecule type" value="mRNA"/>
</dbReference>
<dbReference type="CCDS" id="CCDS59109.1">
    <molecule id="Q86W74-1"/>
</dbReference>
<dbReference type="CCDS" id="CCDS6287.1">
    <molecule id="Q86W74-2"/>
</dbReference>
<dbReference type="RefSeq" id="NP_001257306.1">
    <molecule id="Q86W74-2"/>
    <property type="nucleotide sequence ID" value="NM_001270377.2"/>
</dbReference>
<dbReference type="RefSeq" id="NP_001257307.1">
    <molecule id="Q86W74-2"/>
    <property type="nucleotide sequence ID" value="NM_001270378.2"/>
</dbReference>
<dbReference type="RefSeq" id="NP_001257308.1">
    <molecule id="Q86W74-1"/>
    <property type="nucleotide sequence ID" value="NM_001270379.2"/>
</dbReference>
<dbReference type="RefSeq" id="NP_940683.1">
    <molecule id="Q86W74-2"/>
    <property type="nucleotide sequence ID" value="NM_198401.4"/>
</dbReference>
<dbReference type="RefSeq" id="XP_006716572.1">
    <property type="nucleotide sequence ID" value="XM_006716509.1"/>
</dbReference>
<dbReference type="RefSeq" id="XP_016868595.1">
    <property type="nucleotide sequence ID" value="XM_017013106.1"/>
</dbReference>
<dbReference type="SMR" id="Q86W74"/>
<dbReference type="BioGRID" id="127604">
    <property type="interactions" value="138"/>
</dbReference>
<dbReference type="FunCoup" id="Q86W74">
    <property type="interactions" value="1140"/>
</dbReference>
<dbReference type="IntAct" id="Q86W74">
    <property type="interactions" value="118"/>
</dbReference>
<dbReference type="STRING" id="9606.ENSP00000429015"/>
<dbReference type="iPTMnet" id="Q86W74"/>
<dbReference type="PhosphoSitePlus" id="Q86W74"/>
<dbReference type="BioMuta" id="ANKRD46"/>
<dbReference type="DMDM" id="74750488"/>
<dbReference type="jPOST" id="Q86W74"/>
<dbReference type="MassIVE" id="Q86W74"/>
<dbReference type="PaxDb" id="9606-ENSP00000429015"/>
<dbReference type="PeptideAtlas" id="Q86W74"/>
<dbReference type="ProteomicsDB" id="70129">
    <molecule id="Q86W74-1"/>
</dbReference>
<dbReference type="ProteomicsDB" id="70130">
    <molecule id="Q86W74-2"/>
</dbReference>
<dbReference type="Pumba" id="Q86W74"/>
<dbReference type="Antibodypedia" id="51983">
    <property type="antibodies" value="70 antibodies from 16 providers"/>
</dbReference>
<dbReference type="DNASU" id="157567"/>
<dbReference type="Ensembl" id="ENST00000335659.7">
    <molecule id="Q86W74-2"/>
    <property type="protein sequence ID" value="ENSP00000335287.3"/>
    <property type="gene ID" value="ENSG00000186106.11"/>
</dbReference>
<dbReference type="Ensembl" id="ENST00000519597.5">
    <molecule id="Q86W74-2"/>
    <property type="protein sequence ID" value="ENSP00000430056.1"/>
    <property type="gene ID" value="ENSG00000186106.11"/>
</dbReference>
<dbReference type="Ensembl" id="ENST00000520311.5">
    <molecule id="Q86W74-2"/>
    <property type="protein sequence ID" value="ENSP00000428388.1"/>
    <property type="gene ID" value="ENSG00000186106.11"/>
</dbReference>
<dbReference type="Ensembl" id="ENST00000520552.5">
    <molecule id="Q86W74-1"/>
    <property type="protein sequence ID" value="ENSP00000429015.1"/>
    <property type="gene ID" value="ENSG00000186106.11"/>
</dbReference>
<dbReference type="GeneID" id="157567"/>
<dbReference type="KEGG" id="hsa:157567"/>
<dbReference type="MANE-Select" id="ENST00000335659.7">
    <property type="protein sequence ID" value="ENSP00000335287.3"/>
    <property type="RefSeq nucleotide sequence ID" value="NM_001270377.2"/>
    <property type="RefSeq protein sequence ID" value="NP_001257306.1"/>
</dbReference>
<dbReference type="UCSC" id="uc003yjm.5">
    <molecule id="Q86W74-2"/>
    <property type="organism name" value="human"/>
</dbReference>
<dbReference type="AGR" id="HGNC:27229"/>
<dbReference type="CTD" id="157567"/>
<dbReference type="DisGeNET" id="157567"/>
<dbReference type="GeneCards" id="ANKRD46"/>
<dbReference type="HGNC" id="HGNC:27229">
    <property type="gene designation" value="ANKRD46"/>
</dbReference>
<dbReference type="HPA" id="ENSG00000186106">
    <property type="expression patterns" value="Low tissue specificity"/>
</dbReference>
<dbReference type="neXtProt" id="NX_Q86W74"/>
<dbReference type="OpenTargets" id="ENSG00000186106"/>
<dbReference type="PharmGKB" id="PA142672613"/>
<dbReference type="VEuPathDB" id="HostDB:ENSG00000186106"/>
<dbReference type="eggNOG" id="KOG0508">
    <property type="taxonomic scope" value="Eukaryota"/>
</dbReference>
<dbReference type="GeneTree" id="ENSGT00940000157094"/>
<dbReference type="InParanoid" id="Q86W74"/>
<dbReference type="OMA" id="EYQGNTA"/>
<dbReference type="OrthoDB" id="21416at2759"/>
<dbReference type="PAN-GO" id="Q86W74">
    <property type="GO annotations" value="0 GO annotations based on evolutionary models"/>
</dbReference>
<dbReference type="PhylomeDB" id="Q86W74"/>
<dbReference type="TreeFam" id="TF330790"/>
<dbReference type="PathwayCommons" id="Q86W74"/>
<dbReference type="SignaLink" id="Q86W74"/>
<dbReference type="BioGRID-ORCS" id="157567">
    <property type="hits" value="13 hits in 1158 CRISPR screens"/>
</dbReference>
<dbReference type="ChiTaRS" id="ANKRD46">
    <property type="organism name" value="human"/>
</dbReference>
<dbReference type="GenomeRNAi" id="157567"/>
<dbReference type="Pharos" id="Q86W74">
    <property type="development level" value="Tbio"/>
</dbReference>
<dbReference type="PRO" id="PR:Q86W74"/>
<dbReference type="Proteomes" id="UP000005640">
    <property type="component" value="Chromosome 8"/>
</dbReference>
<dbReference type="RNAct" id="Q86W74">
    <property type="molecule type" value="protein"/>
</dbReference>
<dbReference type="Bgee" id="ENSG00000186106">
    <property type="expression patterns" value="Expressed in endothelial cell and 213 other cell types or tissues"/>
</dbReference>
<dbReference type="ExpressionAtlas" id="Q86W74">
    <property type="expression patterns" value="baseline and differential"/>
</dbReference>
<dbReference type="GO" id="GO:0016020">
    <property type="term" value="C:membrane"/>
    <property type="evidence" value="ECO:0007669"/>
    <property type="project" value="UniProtKB-SubCell"/>
</dbReference>
<dbReference type="Gene3D" id="1.25.40.20">
    <property type="entry name" value="Ankyrin repeat-containing domain"/>
    <property type="match status" value="1"/>
</dbReference>
<dbReference type="InterPro" id="IPR039323">
    <property type="entry name" value="ANKRD_45/46/60"/>
</dbReference>
<dbReference type="InterPro" id="IPR002110">
    <property type="entry name" value="Ankyrin_rpt"/>
</dbReference>
<dbReference type="InterPro" id="IPR036770">
    <property type="entry name" value="Ankyrin_rpt-contain_sf"/>
</dbReference>
<dbReference type="PANTHER" id="PTHR22677">
    <property type="entry name" value="ANKYRIN REPEAT DOMAIN-CONTAINING PROTEIN 60"/>
    <property type="match status" value="1"/>
</dbReference>
<dbReference type="PANTHER" id="PTHR22677:SF4">
    <property type="entry name" value="USHER SYNDROME TYPE-1G PROTEIN-LIKE PROTEIN"/>
    <property type="match status" value="1"/>
</dbReference>
<dbReference type="Pfam" id="PF12796">
    <property type="entry name" value="Ank_2"/>
    <property type="match status" value="1"/>
</dbReference>
<dbReference type="SMART" id="SM00248">
    <property type="entry name" value="ANK"/>
    <property type="match status" value="3"/>
</dbReference>
<dbReference type="SUPFAM" id="SSF48403">
    <property type="entry name" value="Ankyrin repeat"/>
    <property type="match status" value="1"/>
</dbReference>
<dbReference type="PROSITE" id="PS50297">
    <property type="entry name" value="ANK_REP_REGION"/>
    <property type="match status" value="1"/>
</dbReference>
<dbReference type="PROSITE" id="PS50088">
    <property type="entry name" value="ANK_REPEAT"/>
    <property type="match status" value="2"/>
</dbReference>
<comment type="interaction">
    <interactant intactId="EBI-12109402">
        <id>Q86W74-2</id>
    </interactant>
    <interactant intactId="EBI-19125216">
        <id>Q86WK6</id>
        <label>AMIGO1</label>
    </interactant>
    <organismsDiffer>false</organismsDiffer>
    <experiments>3</experiments>
</comment>
<comment type="interaction">
    <interactant intactId="EBI-12109402">
        <id>Q86W74-2</id>
    </interactant>
    <interactant intactId="EBI-2606935">
        <id>Q96BI3</id>
        <label>APH1A</label>
    </interactant>
    <organismsDiffer>false</organismsDiffer>
    <experiments>3</experiments>
</comment>
<comment type="interaction">
    <interactant intactId="EBI-12109402">
        <id>Q86W74-2</id>
    </interactant>
    <interactant intactId="EBI-13059134">
        <id>Q13520</id>
        <label>AQP6</label>
    </interactant>
    <organismsDiffer>false</organismsDiffer>
    <experiments>3</experiments>
</comment>
<comment type="interaction">
    <interactant intactId="EBI-12109402">
        <id>Q86W74-2</id>
    </interactant>
    <interactant intactId="EBI-11343438">
        <id>Q3SXY8</id>
        <label>ARL13B</label>
    </interactant>
    <organismsDiffer>false</organismsDiffer>
    <experiments>3</experiments>
</comment>
<comment type="interaction">
    <interactant intactId="EBI-12109402">
        <id>Q86W74-2</id>
    </interactant>
    <interactant intactId="EBI-700794">
        <id>Q13323</id>
        <label>BIK</label>
    </interactant>
    <organismsDiffer>false</organismsDiffer>
    <experiments>3</experiments>
</comment>
<comment type="interaction">
    <interactant intactId="EBI-12109402">
        <id>Q86W74-2</id>
    </interactant>
    <interactant intactId="EBI-11532900">
        <id>J3KQ12</id>
        <label>BSCL2</label>
    </interactant>
    <organismsDiffer>false</organismsDiffer>
    <experiments>3</experiments>
</comment>
<comment type="interaction">
    <interactant intactId="EBI-12109402">
        <id>Q86W74-2</id>
    </interactant>
    <interactant intactId="EBI-18041102">
        <id>Q6UWD8</id>
        <label>C16orf54</label>
    </interactant>
    <organismsDiffer>false</organismsDiffer>
    <experiments>3</experiments>
</comment>
<comment type="interaction">
    <interactant intactId="EBI-12109402">
        <id>Q86W74-2</id>
    </interactant>
    <interactant intactId="EBI-13320645">
        <id>P20273-5</id>
        <label>CD22</label>
    </interactant>
    <organismsDiffer>false</organismsDiffer>
    <experiments>3</experiments>
</comment>
<comment type="interaction">
    <interactant intactId="EBI-12109402">
        <id>Q86W74-2</id>
    </interactant>
    <interactant intactId="EBI-13046140">
        <id>P15529-3</id>
        <label>CD46</label>
    </interactant>
    <organismsDiffer>false</organismsDiffer>
    <experiments>3</experiments>
</comment>
<comment type="interaction">
    <interactant intactId="EBI-12109402">
        <id>Q86W74-2</id>
    </interactant>
    <interactant intactId="EBI-23801559">
        <id>P56880</id>
        <label>CLDN20</label>
    </interactant>
    <organismsDiffer>false</organismsDiffer>
    <experiments>3</experiments>
</comment>
<comment type="interaction">
    <interactant intactId="EBI-12109402">
        <id>Q86W74-2</id>
    </interactant>
    <interactant intactId="EBI-740744">
        <id>O95471</id>
        <label>CLDN7</label>
    </interactant>
    <organismsDiffer>false</organismsDiffer>
    <experiments>3</experiments>
</comment>
<comment type="interaction">
    <interactant intactId="EBI-12109402">
        <id>Q86W74-2</id>
    </interactant>
    <interactant intactId="EBI-12703404">
        <id>Q8WXI8</id>
        <label>CLEC4D</label>
    </interactant>
    <organismsDiffer>false</organismsDiffer>
    <experiments>3</experiments>
</comment>
<comment type="interaction">
    <interactant intactId="EBI-12109402">
        <id>Q86W74-2</id>
    </interactant>
    <interactant intactId="EBI-17233035">
        <id>Q9BUF7-2</id>
        <label>CRB3</label>
    </interactant>
    <organismsDiffer>false</organismsDiffer>
    <experiments>3</experiments>
</comment>
<comment type="interaction">
    <interactant intactId="EBI-12109402">
        <id>Q86W74-2</id>
    </interactant>
    <interactant intactId="EBI-6942903">
        <id>Q96BA8</id>
        <label>CREB3L1</label>
    </interactant>
    <organismsDiffer>false</organismsDiffer>
    <experiments>3</experiments>
</comment>
<comment type="interaction">
    <interactant intactId="EBI-12109402">
        <id>Q86W74-2</id>
    </interactant>
    <interactant intactId="EBI-747931">
        <id>P78310</id>
        <label>CXADR</label>
    </interactant>
    <organismsDiffer>false</organismsDiffer>
    <experiments>3</experiments>
</comment>
<comment type="interaction">
    <interactant intactId="EBI-12109402">
        <id>Q86W74-2</id>
    </interactant>
    <interactant intactId="EBI-8646596">
        <id>P49447</id>
        <label>CYB561</label>
    </interactant>
    <organismsDiffer>false</organismsDiffer>
    <experiments>3</experiments>
</comment>
<comment type="interaction">
    <interactant intactId="EBI-12109402">
        <id>Q86W74-2</id>
    </interactant>
    <interactant intactId="EBI-3915253">
        <id>Q15125</id>
        <label>EBP</label>
    </interactant>
    <organismsDiffer>false</organismsDiffer>
    <experiments>3</experiments>
</comment>
<comment type="interaction">
    <interactant intactId="EBI-12109402">
        <id>Q86W74-2</id>
    </interactant>
    <interactant intactId="EBI-538287">
        <id>P98172</id>
        <label>EFNB1</label>
    </interactant>
    <organismsDiffer>false</organismsDiffer>
    <experiments>3</experiments>
</comment>
<comment type="interaction">
    <interactant intactId="EBI-12109402">
        <id>Q86W74-2</id>
    </interactant>
    <interactant intactId="EBI-7532268">
        <id>P52799</id>
        <label>EFNB2</label>
    </interactant>
    <organismsDiffer>false</organismsDiffer>
    <experiments>3</experiments>
</comment>
<comment type="interaction">
    <interactant intactId="EBI-12109402">
        <id>Q86W74-2</id>
    </interactant>
    <interactant intactId="EBI-18535450">
        <id>Q9GZR5</id>
        <label>ELOVL4</label>
    </interactant>
    <organismsDiffer>false</organismsDiffer>
    <experiments>3</experiments>
</comment>
<comment type="interaction">
    <interactant intactId="EBI-12109402">
        <id>Q86W74-2</id>
    </interactant>
    <interactant intactId="EBI-18636064">
        <id>Q8TBP5</id>
        <label>FAM174A</label>
    </interactant>
    <organismsDiffer>false</organismsDiffer>
    <experiments>3</experiments>
</comment>
<comment type="interaction">
    <interactant intactId="EBI-12109402">
        <id>Q86W74-2</id>
    </interactant>
    <interactant intactId="EBI-18304435">
        <id>Q5JX71</id>
        <label>FAM209A</label>
    </interactant>
    <organismsDiffer>false</organismsDiffer>
    <experiments>3</experiments>
</comment>
<comment type="interaction">
    <interactant intactId="EBI-12109402">
        <id>Q86W74-2</id>
    </interactant>
    <interactant intactId="EBI-712073">
        <id>Q8NBJ4</id>
        <label>GOLM1</label>
    </interactant>
    <organismsDiffer>false</organismsDiffer>
    <experiments>3</experiments>
</comment>
<comment type="interaction">
    <interactant intactId="EBI-12109402">
        <id>Q86W74-2</id>
    </interactant>
    <interactant intactId="EBI-13345167">
        <id>Q8TDT2</id>
        <label>GPR152</label>
    </interactant>
    <organismsDiffer>false</organismsDiffer>
    <experiments>3</experiments>
</comment>
<comment type="interaction">
    <interactant intactId="EBI-12109402">
        <id>Q86W74-2</id>
    </interactant>
    <interactant intactId="EBI-18076404">
        <id>O15529</id>
        <label>GPR42</label>
    </interactant>
    <organismsDiffer>false</organismsDiffer>
    <experiments>3</experiments>
</comment>
<comment type="interaction">
    <interactant intactId="EBI-12109402">
        <id>Q86W74-2</id>
    </interactant>
    <interactant intactId="EBI-1052304">
        <id>Q8NBQ5</id>
        <label>HSD17B11</label>
    </interactant>
    <organismsDiffer>false</organismsDiffer>
    <experiments>3</experiments>
</comment>
<comment type="interaction">
    <interactant intactId="EBI-12109402">
        <id>Q86W74-2</id>
    </interactant>
    <interactant intactId="EBI-18053395">
        <id>Q7Z5P4</id>
        <label>HSD17B13</label>
    </interactant>
    <organismsDiffer>false</organismsDiffer>
    <experiments>3</experiments>
</comment>
<comment type="interaction">
    <interactant intactId="EBI-12109402">
        <id>Q86W74-2</id>
    </interactant>
    <interactant intactId="EBI-373215">
        <id>Q8IU57</id>
        <label>IFNLR1</label>
    </interactant>
    <organismsDiffer>false</organismsDiffer>
    <experiments>3</experiments>
</comment>
<comment type="interaction">
    <interactant intactId="EBI-12109402">
        <id>Q86W74-2</id>
    </interactant>
    <interactant intactId="EBI-749265">
        <id>Q8N6L0</id>
        <label>KASH5</label>
    </interactant>
    <organismsDiffer>false</organismsDiffer>
    <experiments>3</experiments>
</comment>
<comment type="interaction">
    <interactant intactId="EBI-12109402">
        <id>Q86W74-2</id>
    </interactant>
    <interactant intactId="EBI-8632435">
        <id>P43628</id>
        <label>KIR2DL3</label>
    </interactant>
    <organismsDiffer>false</organismsDiffer>
    <experiments>3</experiments>
</comment>
<comment type="interaction">
    <interactant intactId="EBI-12109402">
        <id>Q86W74-2</id>
    </interactant>
    <interactant intactId="EBI-10173166">
        <id>Q5T700</id>
        <label>LDLRAD1</label>
    </interactant>
    <organismsDiffer>false</organismsDiffer>
    <experiments>3</experiments>
</comment>
<comment type="interaction">
    <interactant intactId="EBI-12109402">
        <id>Q86W74-2</id>
    </interactant>
    <interactant intactId="EBI-11304917">
        <id>Q8N386</id>
        <label>LRRC25</label>
    </interactant>
    <organismsDiffer>false</organismsDiffer>
    <experiments>3</experiments>
</comment>
<comment type="interaction">
    <interactant intactId="EBI-12109402">
        <id>Q86W74-2</id>
    </interactant>
    <interactant intactId="EBI-11956541">
        <id>Q9GZY8-5</id>
        <label>MFF</label>
    </interactant>
    <organismsDiffer>false</organismsDiffer>
    <experiments>3</experiments>
</comment>
<comment type="interaction">
    <interactant intactId="EBI-12109402">
        <id>Q86W74-2</id>
    </interactant>
    <interactant intactId="EBI-6163737">
        <id>Q8N4V1</id>
        <label>MMGT1</label>
    </interactant>
    <organismsDiffer>false</organismsDiffer>
    <experiments>3</experiments>
</comment>
<comment type="interaction">
    <interactant intactId="EBI-12109402">
        <id>Q86W74-2</id>
    </interactant>
    <interactant intactId="EBI-17263240">
        <id>P15941-11</id>
        <label>MUC1</label>
    </interactant>
    <organismsDiffer>false</organismsDiffer>
    <experiments>3</experiments>
</comment>
<comment type="interaction">
    <interactant intactId="EBI-12109402">
        <id>Q86W74-2</id>
    </interactant>
    <interactant intactId="EBI-10247000">
        <id>Q6IBW4-4</id>
        <label>NCAPH2</label>
    </interactant>
    <organismsDiffer>false</organismsDiffer>
    <experiments>3</experiments>
</comment>
<comment type="interaction">
    <interactant intactId="EBI-12109402">
        <id>Q86W74-2</id>
    </interactant>
    <interactant intactId="EBI-7101695">
        <id>Q9Y328</id>
        <label>NSG2</label>
    </interactant>
    <organismsDiffer>false</organismsDiffer>
    <experiments>3</experiments>
</comment>
<comment type="interaction">
    <interactant intactId="EBI-12109402">
        <id>Q86W74-2</id>
    </interactant>
    <interactant intactId="EBI-10485931">
        <id>Q5VZY2</id>
        <label>PLPP4</label>
    </interactant>
    <organismsDiffer>false</organismsDiffer>
    <experiments>3</experiments>
</comment>
<comment type="interaction">
    <interactant intactId="EBI-12109402">
        <id>Q86W74-2</id>
    </interactant>
    <interactant intactId="EBI-3919694">
        <id>P15151</id>
        <label>PVR</label>
    </interactant>
    <organismsDiffer>false</organismsDiffer>
    <experiments>3</experiments>
</comment>
<comment type="interaction">
    <interactant intactId="EBI-12109402">
        <id>Q86W74-2</id>
    </interactant>
    <interactant intactId="EBI-10269209">
        <id>Q8NC24</id>
        <label>RELL2</label>
    </interactant>
    <organismsDiffer>false</organismsDiffer>
    <experiments>3</experiments>
</comment>
<comment type="interaction">
    <interactant intactId="EBI-12109402">
        <id>Q86W74-2</id>
    </interactant>
    <interactant intactId="EBI-10192441">
        <id>Q86VR2</id>
        <label>RETREG3</label>
    </interactant>
    <organismsDiffer>false</organismsDiffer>
    <experiments>3</experiments>
</comment>
<comment type="interaction">
    <interactant intactId="EBI-12109402">
        <id>Q86W74-2</id>
    </interactant>
    <interactant intactId="EBI-17247926">
        <id>Q9NY72</id>
        <label>SCN3B</label>
    </interactant>
    <organismsDiffer>false</organismsDiffer>
    <experiments>3</experiments>
</comment>
<comment type="interaction">
    <interactant intactId="EBI-12109402">
        <id>Q86W74-2</id>
    </interactant>
    <interactant intactId="EBI-2855289">
        <id>Q8WVN6</id>
        <label>SECTM1</label>
    </interactant>
    <organismsDiffer>false</organismsDiffer>
    <experiments>3</experiments>
</comment>
<comment type="interaction">
    <interactant intactId="EBI-12109402">
        <id>Q86W74-2</id>
    </interactant>
    <interactant intactId="EBI-10171518">
        <id>A0PJX4</id>
        <label>SHISA3</label>
    </interactant>
    <organismsDiffer>false</organismsDiffer>
    <experiments>3</experiments>
</comment>
<comment type="interaction">
    <interactant intactId="EBI-12109402">
        <id>Q86W74-2</id>
    </interactant>
    <interactant intactId="EBI-18159983">
        <id>Q3KNW5</id>
        <label>SLC10A6</label>
    </interactant>
    <organismsDiffer>false</organismsDiffer>
    <experiments>3</experiments>
</comment>
<comment type="interaction">
    <interactant intactId="EBI-12109402">
        <id>Q86W74-2</id>
    </interactant>
    <interactant intactId="EBI-17595455">
        <id>P54219-3</id>
        <label>SLC18A1</label>
    </interactant>
    <organismsDiffer>false</organismsDiffer>
    <experiments>3</experiments>
</comment>
<comment type="interaction">
    <interactant intactId="EBI-12109402">
        <id>Q86W74-2</id>
    </interactant>
    <interactant intactId="EBI-2823239">
        <id>Q9NUM3</id>
        <label>SLC39A9</label>
    </interactant>
    <organismsDiffer>false</organismsDiffer>
    <experiments>3</experiments>
</comment>
<comment type="interaction">
    <interactant intactId="EBI-12109402">
        <id>Q86W74-2</id>
    </interactant>
    <interactant intactId="EBI-949146">
        <id>Q969X2</id>
        <label>ST6GALNAC6</label>
    </interactant>
    <organismsDiffer>false</organismsDiffer>
    <experiments>3</experiments>
</comment>
<comment type="interaction">
    <interactant intactId="EBI-12109402">
        <id>Q86W74-2</id>
    </interactant>
    <interactant intactId="EBI-712466">
        <id>Q16623</id>
        <label>STX1A</label>
    </interactant>
    <organismsDiffer>false</organismsDiffer>
    <experiments>3</experiments>
</comment>
<comment type="interaction">
    <interactant intactId="EBI-12109402">
        <id>Q86W74-2</id>
    </interactant>
    <interactant intactId="EBI-11956649">
        <id>P32856-2</id>
        <label>STX2</label>
    </interactant>
    <organismsDiffer>false</organismsDiffer>
    <experiments>3</experiments>
</comment>
<comment type="interaction">
    <interactant intactId="EBI-12109402">
        <id>Q86W74-2</id>
    </interactant>
    <interactant intactId="EBI-744942">
        <id>Q12846</id>
        <label>STX4</label>
    </interactant>
    <organismsDiffer>false</organismsDiffer>
    <experiments>3</experiments>
</comment>
<comment type="interaction">
    <interactant intactId="EBI-12109402">
        <id>Q86W74-2</id>
    </interactant>
    <interactant intactId="EBI-18194029">
        <id>Q96L08</id>
        <label>SUSD3</label>
    </interactant>
    <organismsDiffer>false</organismsDiffer>
    <experiments>3</experiments>
</comment>
<comment type="interaction">
    <interactant intactId="EBI-12109402">
        <id>Q86W74-2</id>
    </interactant>
    <interactant intactId="EBI-726691">
        <id>Q8WY91</id>
        <label>THAP4</label>
    </interactant>
    <organismsDiffer>false</organismsDiffer>
    <experiments>3</experiments>
</comment>
<comment type="interaction">
    <interactant intactId="EBI-12109402">
        <id>Q86W74-2</id>
    </interactant>
    <interactant intactId="EBI-6268651">
        <id>Q9NPL8</id>
        <label>TIMMDC1</label>
    </interactant>
    <organismsDiffer>false</organismsDiffer>
    <experiments>3</experiments>
</comment>
<comment type="interaction">
    <interactant intactId="EBI-12109402">
        <id>Q86W74-2</id>
    </interactant>
    <interactant intactId="EBI-10314986">
        <id>Q9NWD8</id>
        <label>TMEM248</label>
    </interactant>
    <organismsDiffer>false</organismsDiffer>
    <experiments>3</experiments>
</comment>
<comment type="interaction">
    <interactant intactId="EBI-12109402">
        <id>Q86W74-2</id>
    </interactant>
    <interactant intactId="EBI-3923061">
        <id>Q96B21</id>
        <label>TMEM45B</label>
    </interactant>
    <organismsDiffer>false</organismsDiffer>
    <experiments>3</experiments>
</comment>
<comment type="interaction">
    <interactant intactId="EBI-12109402">
        <id>Q86W74-2</id>
    </interactant>
    <interactant intactId="EBI-8649725">
        <id>Q9BSE2</id>
        <label>TMEM79</label>
    </interactant>
    <organismsDiffer>false</organismsDiffer>
    <experiments>3</experiments>
</comment>
<comment type="interaction">
    <interactant intactId="EBI-12109402">
        <id>Q86W74-2</id>
    </interactant>
    <interactant intactId="EBI-12345267">
        <id>O15393-2</id>
        <label>TMPRSS2</label>
    </interactant>
    <organismsDiffer>false</organismsDiffer>
    <experiments>3</experiments>
</comment>
<comment type="subcellular location">
    <subcellularLocation>
        <location evidence="2">Membrane</location>
        <topology evidence="2">Single-pass membrane protein</topology>
    </subcellularLocation>
</comment>
<comment type="alternative products">
    <event type="alternative splicing"/>
    <isoform>
        <id>Q86W74-2</id>
        <name>1</name>
        <sequence type="displayed"/>
    </isoform>
    <isoform>
        <id>Q86W74-1</id>
        <name>2</name>
        <sequence type="described" ref="VSP_060673"/>
    </isoform>
</comment>
<feature type="chain" id="PRO_0000244577" description="Ankyrin repeat domain-containing protein 46">
    <location>
        <begin position="1"/>
        <end position="228"/>
    </location>
</feature>
<feature type="transmembrane region" description="Helical" evidence="1">
    <location>
        <begin position="190"/>
        <end position="210"/>
    </location>
</feature>
<feature type="repeat" description="ANK 1">
    <location>
        <begin position="11"/>
        <end position="40"/>
    </location>
</feature>
<feature type="repeat" description="ANK 2">
    <location>
        <begin position="44"/>
        <end position="73"/>
    </location>
</feature>
<feature type="repeat" description="ANK 3">
    <location>
        <begin position="77"/>
        <end position="103"/>
    </location>
</feature>
<feature type="repeat" description="ANK 4">
    <location>
        <begin position="107"/>
        <end position="138"/>
    </location>
</feature>
<feature type="splice variant" id="VSP_060673" description="In isoform 2." evidence="2">
    <original>VSGVLPFVENQPELVH</original>
    <variation>RRTLRLGSFARQDRSRIQAI</variation>
    <location>
        <begin position="213"/>
        <end position="228"/>
    </location>
</feature>